<reference key="1">
    <citation type="journal article" date="2005" name="Nature">
        <title>Sequencing of Aspergillus nidulans and comparative analysis with A. fumigatus and A. oryzae.</title>
        <authorList>
            <person name="Galagan J.E."/>
            <person name="Calvo S.E."/>
            <person name="Cuomo C."/>
            <person name="Ma L.-J."/>
            <person name="Wortman J.R."/>
            <person name="Batzoglou S."/>
            <person name="Lee S.-I."/>
            <person name="Bastuerkmen M."/>
            <person name="Spevak C.C."/>
            <person name="Clutterbuck J."/>
            <person name="Kapitonov V."/>
            <person name="Jurka J."/>
            <person name="Scazzocchio C."/>
            <person name="Farman M.L."/>
            <person name="Butler J."/>
            <person name="Purcell S."/>
            <person name="Harris S."/>
            <person name="Braus G.H."/>
            <person name="Draht O."/>
            <person name="Busch S."/>
            <person name="D'Enfert C."/>
            <person name="Bouchier C."/>
            <person name="Goldman G.H."/>
            <person name="Bell-Pedersen D."/>
            <person name="Griffiths-Jones S."/>
            <person name="Doonan J.H."/>
            <person name="Yu J."/>
            <person name="Vienken K."/>
            <person name="Pain A."/>
            <person name="Freitag M."/>
            <person name="Selker E.U."/>
            <person name="Archer D.B."/>
            <person name="Penalva M.A."/>
            <person name="Oakley B.R."/>
            <person name="Momany M."/>
            <person name="Tanaka T."/>
            <person name="Kumagai T."/>
            <person name="Asai K."/>
            <person name="Machida M."/>
            <person name="Nierman W.C."/>
            <person name="Denning D.W."/>
            <person name="Caddick M.X."/>
            <person name="Hynes M."/>
            <person name="Paoletti M."/>
            <person name="Fischer R."/>
            <person name="Miller B.L."/>
            <person name="Dyer P.S."/>
            <person name="Sachs M.S."/>
            <person name="Osmani S.A."/>
            <person name="Birren B.W."/>
        </authorList>
    </citation>
    <scope>NUCLEOTIDE SEQUENCE [LARGE SCALE GENOMIC DNA]</scope>
    <source>
        <strain>FGSC A4 / ATCC 38163 / CBS 112.46 / NRRL 194 / M139</strain>
    </source>
</reference>
<reference key="2">
    <citation type="journal article" date="2009" name="Fungal Genet. Biol.">
        <title>The 2008 update of the Aspergillus nidulans genome annotation: a community effort.</title>
        <authorList>
            <person name="Wortman J.R."/>
            <person name="Gilsenan J.M."/>
            <person name="Joardar V."/>
            <person name="Deegan J."/>
            <person name="Clutterbuck J."/>
            <person name="Andersen M.R."/>
            <person name="Archer D."/>
            <person name="Bencina M."/>
            <person name="Braus G."/>
            <person name="Coutinho P."/>
            <person name="von Dohren H."/>
            <person name="Doonan J."/>
            <person name="Driessen A.J."/>
            <person name="Durek P."/>
            <person name="Espeso E."/>
            <person name="Fekete E."/>
            <person name="Flipphi M."/>
            <person name="Estrada C.G."/>
            <person name="Geysens S."/>
            <person name="Goldman G."/>
            <person name="de Groot P.W."/>
            <person name="Hansen K."/>
            <person name="Harris S.D."/>
            <person name="Heinekamp T."/>
            <person name="Helmstaedt K."/>
            <person name="Henrissat B."/>
            <person name="Hofmann G."/>
            <person name="Homan T."/>
            <person name="Horio T."/>
            <person name="Horiuchi H."/>
            <person name="James S."/>
            <person name="Jones M."/>
            <person name="Karaffa L."/>
            <person name="Karanyi Z."/>
            <person name="Kato M."/>
            <person name="Keller N."/>
            <person name="Kelly D.E."/>
            <person name="Kiel J.A."/>
            <person name="Kim J.M."/>
            <person name="van der Klei I.J."/>
            <person name="Klis F.M."/>
            <person name="Kovalchuk A."/>
            <person name="Krasevec N."/>
            <person name="Kubicek C.P."/>
            <person name="Liu B."/>
            <person name="Maccabe A."/>
            <person name="Meyer V."/>
            <person name="Mirabito P."/>
            <person name="Miskei M."/>
            <person name="Mos M."/>
            <person name="Mullins J."/>
            <person name="Nelson D.R."/>
            <person name="Nielsen J."/>
            <person name="Oakley B.R."/>
            <person name="Osmani S.A."/>
            <person name="Pakula T."/>
            <person name="Paszewski A."/>
            <person name="Paulsen I."/>
            <person name="Pilsyk S."/>
            <person name="Pocsi I."/>
            <person name="Punt P.J."/>
            <person name="Ram A.F."/>
            <person name="Ren Q."/>
            <person name="Robellet X."/>
            <person name="Robson G."/>
            <person name="Seiboth B."/>
            <person name="van Solingen P."/>
            <person name="Specht T."/>
            <person name="Sun J."/>
            <person name="Taheri-Talesh N."/>
            <person name="Takeshita N."/>
            <person name="Ussery D."/>
            <person name="vanKuyk P.A."/>
            <person name="Visser H."/>
            <person name="van de Vondervoort P.J."/>
            <person name="de Vries R.P."/>
            <person name="Walton J."/>
            <person name="Xiang X."/>
            <person name="Xiong Y."/>
            <person name="Zeng A.P."/>
            <person name="Brandt B.W."/>
            <person name="Cornell M.J."/>
            <person name="van den Hondel C.A."/>
            <person name="Visser J."/>
            <person name="Oliver S.G."/>
            <person name="Turner G."/>
        </authorList>
    </citation>
    <scope>GENOME REANNOTATION</scope>
    <source>
        <strain>FGSC A4 / ATCC 38163 / CBS 112.46 / NRRL 194 / M139</strain>
    </source>
</reference>
<evidence type="ECO:0000250" key="1"/>
<evidence type="ECO:0000255" key="2"/>
<evidence type="ECO:0000256" key="3">
    <source>
        <dbReference type="SAM" id="MobiDB-lite"/>
    </source>
</evidence>
<evidence type="ECO:0000305" key="4"/>
<organism>
    <name type="scientific">Emericella nidulans (strain FGSC A4 / ATCC 38163 / CBS 112.46 / NRRL 194 / M139)</name>
    <name type="common">Aspergillus nidulans</name>
    <dbReference type="NCBI Taxonomy" id="227321"/>
    <lineage>
        <taxon>Eukaryota</taxon>
        <taxon>Fungi</taxon>
        <taxon>Dikarya</taxon>
        <taxon>Ascomycota</taxon>
        <taxon>Pezizomycotina</taxon>
        <taxon>Eurotiomycetes</taxon>
        <taxon>Eurotiomycetidae</taxon>
        <taxon>Eurotiales</taxon>
        <taxon>Aspergillaceae</taxon>
        <taxon>Aspergillus</taxon>
        <taxon>Aspergillus subgen. Nidulantes</taxon>
    </lineage>
</organism>
<keyword id="KW-0004">4Fe-4S</keyword>
<keyword id="KW-0408">Iron</keyword>
<keyword id="KW-0411">Iron-sulfur</keyword>
<keyword id="KW-0479">Metal-binding</keyword>
<keyword id="KW-1185">Reference proteome</keyword>
<comment type="function">
    <text evidence="1">Component of the cytosolic Fe/S protein assembly machinery. Required for maturation of extramitochondrial Fe/S proteins. May play a role in the transfer of pre-assembled Fe/S clusters to target apoproteins (By similarity).</text>
</comment>
<comment type="similarity">
    <text evidence="4">Belongs to the NARF family.</text>
</comment>
<comment type="sequence caution" evidence="4">
    <conflict type="erroneous initiation">
        <sequence resource="EMBL-CDS" id="EAA59840"/>
    </conflict>
</comment>
<feature type="chain" id="PRO_0000383728" description="Cytosolic Fe-S cluster assembly factor nar1">
    <location>
        <begin position="1"/>
        <end position="590"/>
    </location>
</feature>
<feature type="region of interest" description="Disordered" evidence="3">
    <location>
        <begin position="25"/>
        <end position="50"/>
    </location>
</feature>
<feature type="region of interest" description="Disordered" evidence="3">
    <location>
        <begin position="423"/>
        <end position="446"/>
    </location>
</feature>
<feature type="binding site" evidence="2">
    <location>
        <position position="20"/>
    </location>
    <ligand>
        <name>[4Fe-4S] cluster</name>
        <dbReference type="ChEBI" id="CHEBI:49883"/>
        <label>1</label>
    </ligand>
</feature>
<feature type="binding site" evidence="2">
    <location>
        <position position="60"/>
    </location>
    <ligand>
        <name>[4Fe-4S] cluster</name>
        <dbReference type="ChEBI" id="CHEBI:49883"/>
        <label>1</label>
    </ligand>
</feature>
<feature type="binding site" evidence="2">
    <location>
        <position position="63"/>
    </location>
    <ligand>
        <name>[4Fe-4S] cluster</name>
        <dbReference type="ChEBI" id="CHEBI:49883"/>
        <label>1</label>
    </ligand>
</feature>
<feature type="binding site" evidence="2">
    <location>
        <position position="66"/>
    </location>
    <ligand>
        <name>[4Fe-4S] cluster</name>
        <dbReference type="ChEBI" id="CHEBI:49883"/>
        <label>1</label>
    </ligand>
</feature>
<feature type="binding site" evidence="2">
    <location>
        <position position="204"/>
    </location>
    <ligand>
        <name>[4Fe-4S] cluster</name>
        <dbReference type="ChEBI" id="CHEBI:49883"/>
        <label>2</label>
    </ligand>
</feature>
<feature type="binding site" evidence="2">
    <location>
        <position position="259"/>
    </location>
    <ligand>
        <name>[4Fe-4S] cluster</name>
        <dbReference type="ChEBI" id="CHEBI:49883"/>
        <label>2</label>
    </ligand>
</feature>
<feature type="binding site" evidence="2">
    <location>
        <position position="461"/>
    </location>
    <ligand>
        <name>[4Fe-4S] cluster</name>
        <dbReference type="ChEBI" id="CHEBI:49883"/>
        <label>2</label>
    </ligand>
</feature>
<feature type="binding site" evidence="2">
    <location>
        <position position="465"/>
    </location>
    <ligand>
        <name>[4Fe-4S] cluster</name>
        <dbReference type="ChEBI" id="CHEBI:49883"/>
        <label>2</label>
    </ligand>
</feature>
<protein>
    <recommendedName>
        <fullName>Cytosolic Fe-S cluster assembly factor nar1</fullName>
    </recommendedName>
    <alternativeName>
        <fullName>Nuclear architecture-related protein 1</fullName>
    </alternativeName>
</protein>
<accession>Q5B748</accession>
<accession>C8V443</accession>
<dbReference type="EMBL" id="AACD01000061">
    <property type="protein sequence ID" value="EAA59840.1"/>
    <property type="status" value="ALT_INIT"/>
    <property type="molecule type" value="Genomic_DNA"/>
</dbReference>
<dbReference type="EMBL" id="BN001302">
    <property type="protein sequence ID" value="CBF75735.1"/>
    <property type="molecule type" value="Genomic_DNA"/>
</dbReference>
<dbReference type="RefSeq" id="XP_661236.1">
    <property type="nucleotide sequence ID" value="XM_656144.1"/>
</dbReference>
<dbReference type="SMR" id="Q5B748"/>
<dbReference type="FunCoup" id="Q5B748">
    <property type="interactions" value="366"/>
</dbReference>
<dbReference type="STRING" id="227321.Q5B748"/>
<dbReference type="EnsemblFungi" id="CBF75735">
    <property type="protein sequence ID" value="CBF75735"/>
    <property type="gene ID" value="ANIA_03632"/>
</dbReference>
<dbReference type="VEuPathDB" id="FungiDB:AN3632"/>
<dbReference type="eggNOG" id="KOG2439">
    <property type="taxonomic scope" value="Eukaryota"/>
</dbReference>
<dbReference type="HOGENOM" id="CLU_018240_0_1_1"/>
<dbReference type="InParanoid" id="Q5B748"/>
<dbReference type="OMA" id="GYLHHVL"/>
<dbReference type="OrthoDB" id="10253113at2759"/>
<dbReference type="Proteomes" id="UP000000560">
    <property type="component" value="Chromosome II"/>
</dbReference>
<dbReference type="GO" id="GO:0097361">
    <property type="term" value="C:cytosolic [4Fe-4S] assembly targeting complex"/>
    <property type="evidence" value="ECO:0000318"/>
    <property type="project" value="GO_Central"/>
</dbReference>
<dbReference type="GO" id="GO:0051539">
    <property type="term" value="F:4 iron, 4 sulfur cluster binding"/>
    <property type="evidence" value="ECO:0007669"/>
    <property type="project" value="UniProtKB-KW"/>
</dbReference>
<dbReference type="GO" id="GO:0051536">
    <property type="term" value="F:iron-sulfur cluster binding"/>
    <property type="evidence" value="ECO:0000250"/>
    <property type="project" value="UniProtKB"/>
</dbReference>
<dbReference type="GO" id="GO:0046872">
    <property type="term" value="F:metal ion binding"/>
    <property type="evidence" value="ECO:0007669"/>
    <property type="project" value="UniProtKB-KW"/>
</dbReference>
<dbReference type="GO" id="GO:0016226">
    <property type="term" value="P:iron-sulfur cluster assembly"/>
    <property type="evidence" value="ECO:0000250"/>
    <property type="project" value="UniProtKB"/>
</dbReference>
<dbReference type="FunFam" id="3.30.70.20:FF:000042">
    <property type="entry name" value="Cytosolic Fe-S cluster assembly factor NAR1"/>
    <property type="match status" value="1"/>
</dbReference>
<dbReference type="FunFam" id="3.40.50.1780:FF:000004">
    <property type="entry name" value="Cytosolic Fe-S cluster assembly factor nar1"/>
    <property type="match status" value="1"/>
</dbReference>
<dbReference type="FunFam" id="3.40.50.1780:FF:000015">
    <property type="entry name" value="Cytosolic Fe-S cluster assembly factor nar1"/>
    <property type="match status" value="1"/>
</dbReference>
<dbReference type="Gene3D" id="3.40.50.1780">
    <property type="match status" value="1"/>
</dbReference>
<dbReference type="Gene3D" id="3.40.950.10">
    <property type="entry name" value="Fe-only Hydrogenase (Larger Subunit), Chain L, domain 3"/>
    <property type="match status" value="1"/>
</dbReference>
<dbReference type="InterPro" id="IPR050340">
    <property type="entry name" value="Cytosolic_Fe-S_CAF"/>
</dbReference>
<dbReference type="InterPro" id="IPR009016">
    <property type="entry name" value="Fe_hydrogenase"/>
</dbReference>
<dbReference type="InterPro" id="IPR004108">
    <property type="entry name" value="Fe_hydrogenase_lsu_C"/>
</dbReference>
<dbReference type="PANTHER" id="PTHR11615">
    <property type="entry name" value="NITRATE, FORMATE, IRON DEHYDROGENASE"/>
    <property type="match status" value="1"/>
</dbReference>
<dbReference type="Pfam" id="PF02906">
    <property type="entry name" value="Fe_hyd_lg_C"/>
    <property type="match status" value="1"/>
</dbReference>
<dbReference type="SUPFAM" id="SSF53920">
    <property type="entry name" value="Fe-only hydrogenase"/>
    <property type="match status" value="1"/>
</dbReference>
<proteinExistence type="inferred from homology"/>
<name>NAR1_EMENI</name>
<sequence>MSAILSADDLNDFISPGVACIKPVESLPQKQSNENPYEVTTEDKVQPENPPPAQISLTDCLACSGCVTSAEAVLISLQSHNEVLNTLDAQPEIRLVSGENGTVIEDSGRTRDEGRIFVASVSPQVRASLAATYGVSEKEANHIIHQFLSGPNGLRAGGKHGSGFSWVVDTNSLREAVLVLTADEVSESLTGSSAPKRPILSSACPGWICYAEKTHPFILPHLSRLKSPQALTGTFLKTVISKKLGVPASRIWHLSIMPCFDKKLEASREELTDAAWNRLSSGEPNTPVRDVDCVITSRELLSLASSRGISLPNLPRKSLPQSLRLPFPDPALNVFLFSEKSFSRQTSASGTSGGYLHNVLLSFQARNPGSEIVTQRGRNADVVDYTLMSPEGEPILKAARYYGFRNIQNLVRKLKPARVSRLPGAKVATGQTAGGRRQPISRNGASAGSSMDYAYVEVMACPGGCTNGGGQIRIGDAREFNAQHDASVTSETSKPLPHEQRSWLARVDEAYYSADSDMDDAVEDVRTVSVTDNEDRVHKTLQHWSAITDIPLEKLAYTTYREVESDVGKPSAPNDTSRVVELAGKIGGGW</sequence>
<gene>
    <name type="primary">nar1</name>
    <name type="ORF">AN3632</name>
</gene>